<evidence type="ECO:0000250" key="1">
    <source>
        <dbReference type="UniProtKB" id="P04798"/>
    </source>
</evidence>
<evidence type="ECO:0000255" key="2"/>
<evidence type="ECO:0000255" key="3">
    <source>
        <dbReference type="PROSITE-ProRule" id="PRU00498"/>
    </source>
</evidence>
<evidence type="ECO:0000269" key="4">
    <source>
    </source>
</evidence>
<evidence type="ECO:0000269" key="5">
    <source>
    </source>
</evidence>
<evidence type="ECO:0000269" key="6">
    <source>
    </source>
</evidence>
<evidence type="ECO:0000303" key="7">
    <source>
    </source>
</evidence>
<evidence type="ECO:0000305" key="8"/>
<evidence type="ECO:0000305" key="9">
    <source>
    </source>
</evidence>
<name>NOTH_ASPVE</name>
<gene>
    <name evidence="7" type="primary">notH'</name>
</gene>
<dbReference type="EC" id="1.-.-.-" evidence="9"/>
<dbReference type="EMBL" id="JQ708194">
    <property type="protein sequence ID" value="AGC83579.1"/>
    <property type="molecule type" value="Genomic_DNA"/>
</dbReference>
<dbReference type="SMR" id="L7WRY5"/>
<dbReference type="GlyCosmos" id="L7WRY5">
    <property type="glycosylation" value="2 sites, No reported glycans"/>
</dbReference>
<dbReference type="VEuPathDB" id="FungiDB:ASPVEDRAFT_872263"/>
<dbReference type="GO" id="GO:0016020">
    <property type="term" value="C:membrane"/>
    <property type="evidence" value="ECO:0007669"/>
    <property type="project" value="UniProtKB-SubCell"/>
</dbReference>
<dbReference type="GO" id="GO:0020037">
    <property type="term" value="F:heme binding"/>
    <property type="evidence" value="ECO:0007669"/>
    <property type="project" value="InterPro"/>
</dbReference>
<dbReference type="GO" id="GO:0005506">
    <property type="term" value="F:iron ion binding"/>
    <property type="evidence" value="ECO:0007669"/>
    <property type="project" value="InterPro"/>
</dbReference>
<dbReference type="GO" id="GO:0004497">
    <property type="term" value="F:monooxygenase activity"/>
    <property type="evidence" value="ECO:0007669"/>
    <property type="project" value="UniProtKB-KW"/>
</dbReference>
<dbReference type="GO" id="GO:0016705">
    <property type="term" value="F:oxidoreductase activity, acting on paired donors, with incorporation or reduction of molecular oxygen"/>
    <property type="evidence" value="ECO:0007669"/>
    <property type="project" value="InterPro"/>
</dbReference>
<dbReference type="GO" id="GO:0009820">
    <property type="term" value="P:alkaloid metabolic process"/>
    <property type="evidence" value="ECO:0007669"/>
    <property type="project" value="UniProtKB-KW"/>
</dbReference>
<dbReference type="GO" id="GO:0019748">
    <property type="term" value="P:secondary metabolic process"/>
    <property type="evidence" value="ECO:0007669"/>
    <property type="project" value="UniProtKB-ARBA"/>
</dbReference>
<dbReference type="CDD" id="cd11041">
    <property type="entry name" value="CYP503A1-like"/>
    <property type="match status" value="1"/>
</dbReference>
<dbReference type="Gene3D" id="1.10.630.10">
    <property type="entry name" value="Cytochrome P450"/>
    <property type="match status" value="1"/>
</dbReference>
<dbReference type="InterPro" id="IPR001128">
    <property type="entry name" value="Cyt_P450"/>
</dbReference>
<dbReference type="InterPro" id="IPR002403">
    <property type="entry name" value="Cyt_P450_E_grp-IV"/>
</dbReference>
<dbReference type="InterPro" id="IPR036396">
    <property type="entry name" value="Cyt_P450_sf"/>
</dbReference>
<dbReference type="PANTHER" id="PTHR46206">
    <property type="entry name" value="CYTOCHROME P450"/>
    <property type="match status" value="1"/>
</dbReference>
<dbReference type="PANTHER" id="PTHR46206:SF3">
    <property type="entry name" value="P450, PUTATIVE (EUROFUNG)-RELATED"/>
    <property type="match status" value="1"/>
</dbReference>
<dbReference type="Pfam" id="PF00067">
    <property type="entry name" value="p450"/>
    <property type="match status" value="1"/>
</dbReference>
<dbReference type="PRINTS" id="PR00465">
    <property type="entry name" value="EP450IV"/>
</dbReference>
<dbReference type="SUPFAM" id="SSF48264">
    <property type="entry name" value="Cytochrome P450"/>
    <property type="match status" value="1"/>
</dbReference>
<sequence length="499" mass="56650">MAQDTALHLPLGLEPAGWALALLTSSIIYLFLSPKSKSPRFPVVNKYWWDFFQAKAKRDFEAGAEDLIKLGLSKARTKPRREYPRLVLSDQLADAVGMDNRFDQDKGIAPVNLVTLKGFESMYAGALHDSVPRPATSATSKRLVHLTRPFSEETTDFLQREWTESPDWHDIEVYPVISRLTAQVLSRAFVGPRLCRDTRWLEIATTYISNRLTAVVAVQKWGAVLHPIVHWFLPSCRRLRAQNKRARELLQPELDRIKESPLEDETFTSLAWIHGYGQGYIYDPGLAQLRLSAVANHTTSDMMTKTLIRICENPELIQPLREEAIEAVRGGGLRVAALQKMFLMESVMQESQRLEPFILLSMFRYATETVTLPEGTTIPKGTLLAIANPSRLDPAIYPDPHKFDGYRFVRMREDPRHAHLAPFTKTNSTNLNFGHGKQACPGRFIAVNQIKIALCHMLLKYDIELVEECPSQLVRSGLVTVRNPGAKIRVRRRQEEVCL</sequence>
<organism>
    <name type="scientific">Aspergillus versicolor</name>
    <dbReference type="NCBI Taxonomy" id="46472"/>
    <lineage>
        <taxon>Eukaryota</taxon>
        <taxon>Fungi</taxon>
        <taxon>Dikarya</taxon>
        <taxon>Ascomycota</taxon>
        <taxon>Pezizomycotina</taxon>
        <taxon>Eurotiomycetes</taxon>
        <taxon>Eurotiomycetidae</taxon>
        <taxon>Eurotiales</taxon>
        <taxon>Aspergillaceae</taxon>
        <taxon>Aspergillus</taxon>
        <taxon>Aspergillus subgen. Nidulantes</taxon>
    </lineage>
</organism>
<keyword id="KW-0017">Alkaloid metabolism</keyword>
<keyword id="KW-0325">Glycoprotein</keyword>
<keyword id="KW-0349">Heme</keyword>
<keyword id="KW-0408">Iron</keyword>
<keyword id="KW-0472">Membrane</keyword>
<keyword id="KW-0479">Metal-binding</keyword>
<keyword id="KW-0503">Monooxygenase</keyword>
<keyword id="KW-0560">Oxidoreductase</keyword>
<keyword id="KW-0812">Transmembrane</keyword>
<keyword id="KW-1133">Transmembrane helix</keyword>
<feature type="chain" id="PRO_0000448807" description="Cytochrome P450 monooxygenase notH'">
    <location>
        <begin position="1"/>
        <end position="499"/>
    </location>
</feature>
<feature type="transmembrane region" description="Helical" evidence="2">
    <location>
        <begin position="11"/>
        <end position="31"/>
    </location>
</feature>
<feature type="binding site" description="axial binding residue" evidence="1">
    <location>
        <position position="440"/>
    </location>
    <ligand>
        <name>heme</name>
        <dbReference type="ChEBI" id="CHEBI:30413"/>
    </ligand>
    <ligandPart>
        <name>Fe</name>
        <dbReference type="ChEBI" id="CHEBI:18248"/>
    </ligandPart>
</feature>
<feature type="glycosylation site" description="N-linked (GlcNAc...) asparagine" evidence="3">
    <location>
        <position position="296"/>
    </location>
</feature>
<feature type="glycosylation site" description="N-linked (GlcNAc...) asparagine" evidence="3">
    <location>
        <position position="427"/>
    </location>
</feature>
<accession>L7WRY5</accession>
<comment type="function">
    <text evidence="5 6 9">Cytochrome P450 monooxygenase; part of the gene cluster that mediates the biosynthesis of notoamide, a fungal indole alkaloid that belongs to a family of natural products containing a characteristic bicyclo[2.2.2]diazaoctane core (PubMed:23213353). The first step of notoamide biosynthesis involves coupling of L-proline and L-tryptophan by the bimodular NRPS notE', to produce cyclo-L-tryptophan-L-proline called brevianamide F (Probable). The reverse prenyltransferase notF' then acts as a deoxybrevianamide E synthase and converts brevianamide F to deoxybrevianamide E via reverse prenylation at C-2 of the indole ring leading to the bicyclo[2.2.2]diazaoctane core (Probable) (PubMed:22660767). Deoxybrevianamide E is further hydroxylated at C-6 of the indole ring, likely catalyzed by the cytochrome P450 monooxygenase notG', to yield 6-hydroxy-deoxybrevianamide E (Probable). 6-hydroxy-deoxybrevianamide E is a specific substrate of the prenyltransferase notC' for normal prenylation at C-7 to produce 6-hydroxy-7-prenyl-deoxybrevianamide, also called notoamide S (Probable). As the proposed pivotal branching point in notoamide biosynthesis, notoamide S can be diverted to notoamide E through an oxidative pyran ring closure putatively catalyzed by either notH' cytochrome P450 monooxygenase or the notD' FAD-linked oxidoreductase (Probable). This step would be followed by an indole 2,3-epoxidation-initiated pinacol-like rearrangement catalyzed by the notB' FAD-dependent monooxygenase leading to the formation of notoamide C and notoamide D (Probable). On the other hand notoamide S is converted to notoamide T by notH' (or notD'), a bifunctional oxidase that also functions as the intramolecular Diels-Alderase responsible for generation of (-)-notoamide T (Probable). To generate antipodal (+)-notoaminide T, notH (or notD) in Aspergillus strain MF297-2 is expected to catalyze a Diels-Alder reaction leading to the opposite stereochemistry (Probable). The remaining oxidoreductase notD' (or notH') likely catalyzes the oxidative pyran ring formation to yield (-)-stephacidin A (Probable). The FAD-dependent monooxygenase notI' is highly similar to notB' and is predicted to catalyze a similar conversion from (-)-stephacidin A to (+)-notoamide B via the 2,3-epoxidation of (-)-stephacidin A followed by a pinacol-type rearrangement (Probable). Finally, it remains unclear which enzyme could be responsible for the final hydroxylation steps leading to notoamide A and sclerotiamide (Probable).</text>
</comment>
<comment type="cofactor">
    <cofactor evidence="1">
        <name>heme</name>
        <dbReference type="ChEBI" id="CHEBI:30413"/>
    </cofactor>
</comment>
<comment type="pathway">
    <text evidence="9">Alkaloid biosynthesis.</text>
</comment>
<comment type="subcellular location">
    <subcellularLocation>
        <location evidence="2">Membrane</location>
        <topology evidence="2">Single-pass membrane protein</topology>
    </subcellularLocation>
</comment>
<comment type="biotechnology">
    <text evidence="4">Notoamides have been shown to exhibit antitumoral activities (PubMed:17304611). Notoamides A-C show moderate cytotoxicity against HeLa and L1210 cells with IC(50) values in the range of 22-52 mg/ml, but the IC(50) value of notoamide D is greater than 100 mg/ml (PubMed:17304611). Moreover, notoamide C induces G2/M-cell cycle arrest at a concentration of 6.3 mg/ml (PubMed:17304611).</text>
</comment>
<comment type="similarity">
    <text evidence="8">Belongs to the cytochrome P450 family.</text>
</comment>
<reference key="1">
    <citation type="journal article" date="2012" name="Med. Chem. Commun.">
        <title>Comparative analysis of the biosynthetic systems for fungal bicyclo[2.2.2]diazaoctane indole alkaloids: the (+)/(-)-notoamide, paraherquamide and malbrancheamide pathways.</title>
        <authorList>
            <person name="Li S."/>
            <person name="Anand K."/>
            <person name="Tran H."/>
            <person name="Yu F."/>
            <person name="Finefield J.M."/>
            <person name="Sunderhaus J.D."/>
            <person name="McAfoos T.J."/>
            <person name="Tsukamoto S."/>
            <person name="Williams R.M."/>
            <person name="Sherman D.H."/>
        </authorList>
    </citation>
    <scope>NUCLEOTIDE SEQUENCE [GENOMIC DNA]</scope>
    <scope>FUNCTION</scope>
    <scope>PATHWAY</scope>
    <source>
        <strain>NRRL 35600</strain>
    </source>
</reference>
<reference key="2">
    <citation type="journal article" date="2007" name="Angew. Chem. Int. Ed.">
        <title>Notoamides A-D: prenylated indole alkaloids isolated from a marine-derived fungus, Aspergillus sp.</title>
        <authorList>
            <person name="Kato H."/>
            <person name="Yoshida T."/>
            <person name="Tokue T."/>
            <person name="Nojiri Y."/>
            <person name="Hirota H."/>
            <person name="Ohta T."/>
            <person name="Williams R.M."/>
            <person name="Tsukamoto S."/>
        </authorList>
    </citation>
    <scope>BIOTECHNOLOGY</scope>
</reference>
<reference key="3">
    <citation type="journal article" date="2013" name="Appl. Microbiol. Biotechnol.">
        <title>Identification of a brevianamide F reverse prenyltransferase BrePT from Aspergillus versicolor with a broad substrate specificity towards tryptophan-containing cyclic dipeptides.</title>
        <authorList>
            <person name="Yin S."/>
            <person name="Yu X."/>
            <person name="Wang Q."/>
            <person name="Liu X.Q."/>
            <person name="Li S.M."/>
        </authorList>
    </citation>
    <scope>FUNCTION</scope>
</reference>
<proteinExistence type="evidence at protein level"/>
<protein>
    <recommendedName>
        <fullName evidence="7">Cytochrome P450 monooxygenase notH'</fullName>
        <ecNumber evidence="9">1.-.-.-</ecNumber>
    </recommendedName>
    <alternativeName>
        <fullName evidence="7">Notoamide biosynthesis cluster protein H'</fullName>
    </alternativeName>
</protein>